<keyword id="KW-1003">Cell membrane</keyword>
<keyword id="KW-0963">Cytoplasm</keyword>
<keyword id="KW-0268">Exocytosis</keyword>
<keyword id="KW-0472">Membrane</keyword>
<keyword id="KW-0653">Protein transport</keyword>
<keyword id="KW-1185">Reference proteome</keyword>
<keyword id="KW-0964">Secreted</keyword>
<keyword id="KW-0813">Transport</keyword>
<comment type="function">
    <text evidence="1 3 4">Influences the subcellular localization patterns of other exocyst complex proteins (e.g. SEC5A, SEC15A, SEC15B and EXO84B) leading to their recruitment to exocyst, well-defined large punctate structures throughout the cytosol (PubMed:19895414, PubMed:24307681). Essential component for the formation and the recruitment of exocyst subunits to the exocyst-positive organelle (EXPO), a secreted double membrane structure also called extracellular exosome, that acts as a sequester for cytosolic proteins to release them into the apoplast (PubMed:21193573, PubMed:24307681).</text>
</comment>
<comment type="subunit">
    <text evidence="4">Component of the exocyst complex and of the exocyst-positive organelle (EXPO). Interacts with SEC6, SEC10A and SEC10B.</text>
</comment>
<comment type="interaction">
    <interactant intactId="EBI-4429105">
        <id>Q9FNR3</id>
    </interactant>
    <interactant intactId="EBI-4426504">
        <id>Q93WJ9</id>
        <label>KAN1</label>
    </interactant>
    <organismsDiffer>false</organismsDiffer>
    <experiments>2</experiments>
</comment>
<comment type="interaction">
    <interactant intactId="EBI-4429105">
        <id>Q9FNR3</id>
    </interactant>
    <interactant intactId="EBI-25506855">
        <id>O23160</id>
        <label>MYB73</label>
    </interactant>
    <organismsDiffer>false</organismsDiffer>
    <experiments>3</experiments>
</comment>
<comment type="subcellular location">
    <subcellularLocation>
        <location evidence="3">Secreted</location>
        <location evidence="3">Extracellular exosome</location>
    </subcellularLocation>
    <subcellularLocation>
        <location evidence="3">Secreted</location>
    </subcellularLocation>
    <subcellularLocation>
        <location evidence="3">Cell membrane</location>
    </subcellularLocation>
    <subcellularLocation>
        <location evidence="1 3">Cytoplasm</location>
    </subcellularLocation>
    <subcellularLocation>
        <location evidence="1 3">Endomembrane system</location>
    </subcellularLocation>
    <text evidence="1 3">Localized to well-defined large punctate structures throughout the cytosol (PubMed:19895414). Component of the secreted double membrane structure exocyst-positive organelle (EXPO). Locates to the plasma membrane as discrete punctae and secreted outside of the cells (PubMed:21193573).</text>
</comment>
<comment type="tissue specificity">
    <text evidence="2">Expressed in roots, in the root-hair zone, both in root hair and nonhair cells.</text>
</comment>
<comment type="disruption phenotype">
    <text evidence="4">Unability to recruit a number of exocyst subunits to the exocyst-positive organelle (EXPO).</text>
</comment>
<comment type="similarity">
    <text evidence="6">Belongs to the EXO70 family.</text>
</comment>
<organism>
    <name type="scientific">Arabidopsis thaliana</name>
    <name type="common">Mouse-ear cress</name>
    <dbReference type="NCBI Taxonomy" id="3702"/>
    <lineage>
        <taxon>Eukaryota</taxon>
        <taxon>Viridiplantae</taxon>
        <taxon>Streptophyta</taxon>
        <taxon>Embryophyta</taxon>
        <taxon>Tracheophyta</taxon>
        <taxon>Spermatophyta</taxon>
        <taxon>Magnoliopsida</taxon>
        <taxon>eudicotyledons</taxon>
        <taxon>Gunneridae</taxon>
        <taxon>Pentapetalae</taxon>
        <taxon>rosids</taxon>
        <taxon>malvids</taxon>
        <taxon>Brassicales</taxon>
        <taxon>Brassicaceae</taxon>
        <taxon>Camelineae</taxon>
        <taxon>Arabidopsis</taxon>
    </lineage>
</organism>
<accession>Q9FNR3</accession>
<protein>
    <recommendedName>
        <fullName evidence="5">Exocyst complex component EXO70E2</fullName>
        <shortName evidence="5">AtExo70e2</shortName>
    </recommendedName>
    <alternativeName>
        <fullName evidence="5">Exocyst subunit Exo70 family protein E2</fullName>
    </alternativeName>
</protein>
<name>E70E2_ARATH</name>
<gene>
    <name evidence="5" type="primary">EXO70E2</name>
    <name evidence="7" type="ordered locus">At5g61010</name>
    <name evidence="8" type="ORF">MAF19.1</name>
</gene>
<evidence type="ECO:0000269" key="1">
    <source>
    </source>
</evidence>
<evidence type="ECO:0000269" key="2">
    <source>
    </source>
</evidence>
<evidence type="ECO:0000269" key="3">
    <source>
    </source>
</evidence>
<evidence type="ECO:0000269" key="4">
    <source>
    </source>
</evidence>
<evidence type="ECO:0000303" key="5">
    <source>
    </source>
</evidence>
<evidence type="ECO:0000305" key="6"/>
<evidence type="ECO:0000312" key="7">
    <source>
        <dbReference type="Araport" id="AT5G61010"/>
    </source>
</evidence>
<evidence type="ECO:0000312" key="8">
    <source>
        <dbReference type="EMBL" id="BAB10364.1"/>
    </source>
</evidence>
<proteinExistence type="evidence at protein level"/>
<reference key="1">
    <citation type="journal article" date="1997" name="DNA Res.">
        <title>Structural analysis of Arabidopsis thaliana chromosome 5. II. Sequence features of the regions of 1,044,062 bp covered by thirteen physically assigned P1 clones.</title>
        <authorList>
            <person name="Kotani H."/>
            <person name="Nakamura Y."/>
            <person name="Sato S."/>
            <person name="Kaneko T."/>
            <person name="Asamizu E."/>
            <person name="Miyajima N."/>
            <person name="Tabata S."/>
        </authorList>
    </citation>
    <scope>NUCLEOTIDE SEQUENCE [LARGE SCALE GENOMIC DNA]</scope>
    <source>
        <strain>cv. Columbia</strain>
    </source>
</reference>
<reference key="2">
    <citation type="journal article" date="2017" name="Plant J.">
        <title>Araport11: a complete reannotation of the Arabidopsis thaliana reference genome.</title>
        <authorList>
            <person name="Cheng C.Y."/>
            <person name="Krishnakumar V."/>
            <person name="Chan A.P."/>
            <person name="Thibaud-Nissen F."/>
            <person name="Schobel S."/>
            <person name="Town C.D."/>
        </authorList>
    </citation>
    <scope>GENOME REANNOTATION</scope>
    <source>
        <strain>cv. Columbia</strain>
    </source>
</reference>
<reference key="3">
    <citation type="journal article" date="2003" name="Science">
        <title>Empirical analysis of transcriptional activity in the Arabidopsis genome.</title>
        <authorList>
            <person name="Yamada K."/>
            <person name="Lim J."/>
            <person name="Dale J.M."/>
            <person name="Chen H."/>
            <person name="Shinn P."/>
            <person name="Palm C.J."/>
            <person name="Southwick A.M."/>
            <person name="Wu H.C."/>
            <person name="Kim C.J."/>
            <person name="Nguyen M."/>
            <person name="Pham P.K."/>
            <person name="Cheuk R.F."/>
            <person name="Karlin-Newmann G."/>
            <person name="Liu S.X."/>
            <person name="Lam B."/>
            <person name="Sakano H."/>
            <person name="Wu T."/>
            <person name="Yu G."/>
            <person name="Miranda M."/>
            <person name="Quach H.L."/>
            <person name="Tripp M."/>
            <person name="Chang C.H."/>
            <person name="Lee J.M."/>
            <person name="Toriumi M.J."/>
            <person name="Chan M.M."/>
            <person name="Tang C.C."/>
            <person name="Onodera C.S."/>
            <person name="Deng J.M."/>
            <person name="Akiyama K."/>
            <person name="Ansari Y."/>
            <person name="Arakawa T."/>
            <person name="Banh J."/>
            <person name="Banno F."/>
            <person name="Bowser L."/>
            <person name="Brooks S.Y."/>
            <person name="Carninci P."/>
            <person name="Chao Q."/>
            <person name="Choy N."/>
            <person name="Enju A."/>
            <person name="Goldsmith A.D."/>
            <person name="Gurjal M."/>
            <person name="Hansen N.F."/>
            <person name="Hayashizaki Y."/>
            <person name="Johnson-Hopson C."/>
            <person name="Hsuan V.W."/>
            <person name="Iida K."/>
            <person name="Karnes M."/>
            <person name="Khan S."/>
            <person name="Koesema E."/>
            <person name="Ishida J."/>
            <person name="Jiang P.X."/>
            <person name="Jones T."/>
            <person name="Kawai J."/>
            <person name="Kamiya A."/>
            <person name="Meyers C."/>
            <person name="Nakajima M."/>
            <person name="Narusaka M."/>
            <person name="Seki M."/>
            <person name="Sakurai T."/>
            <person name="Satou M."/>
            <person name="Tamse R."/>
            <person name="Vaysberg M."/>
            <person name="Wallender E.K."/>
            <person name="Wong C."/>
            <person name="Yamamura Y."/>
            <person name="Yuan S."/>
            <person name="Shinozaki K."/>
            <person name="Davis R.W."/>
            <person name="Theologis A."/>
            <person name="Ecker J.R."/>
        </authorList>
    </citation>
    <scope>NUCLEOTIDE SEQUENCE [LARGE SCALE MRNA]</scope>
    <source>
        <strain>cv. Columbia</strain>
    </source>
</reference>
<reference key="4">
    <citation type="journal article" date="2009" name="DNA Res.">
        <title>Analysis of multiple occurrences of alternative splicing events in Arabidopsis thaliana using novel sequenced full-length cDNAs.</title>
        <authorList>
            <person name="Iida K."/>
            <person name="Fukami-Kobayashi K."/>
            <person name="Toyoda A."/>
            <person name="Sakaki Y."/>
            <person name="Kobayashi M."/>
            <person name="Seki M."/>
            <person name="Shinozaki K."/>
        </authorList>
    </citation>
    <scope>NUCLEOTIDE SEQUENCE [LARGE SCALE MRNA]</scope>
    <source>
        <strain>cv. Columbia</strain>
        <tissue>Flower</tissue>
        <tissue>Silique</tissue>
    </source>
</reference>
<reference key="5">
    <citation type="journal article" date="2006" name="Plant J.">
        <title>AtEXO70A1, a member of a family of putative exocyst subunits specifically expanded in land plants, is important for polar growth and plant development.</title>
        <authorList>
            <person name="Synek L."/>
            <person name="Schlager N."/>
            <person name="Elias M."/>
            <person name="Quentin M."/>
            <person name="Hauser M.-T."/>
            <person name="Zarsky V."/>
        </authorList>
    </citation>
    <scope>GENE FAMILY</scope>
    <scope>NOMENCLATURE</scope>
</reference>
<reference key="6">
    <citation type="journal article" date="2010" name="New Phytol.">
        <title>Characterization of the Arabidopsis thaliana exocyst complex gene families by phylogenetic, expression profiling, and subcellular localization studies.</title>
        <authorList>
            <person name="Chong Y.T."/>
            <person name="Gidda S.K."/>
            <person name="Sanford C."/>
            <person name="Parkinson J."/>
            <person name="Mullen R.T."/>
            <person name="Goring D.R."/>
        </authorList>
    </citation>
    <scope>FUNCTION</scope>
    <scope>SUBCELLULAR LOCATION</scope>
    <scope>GENE FAMILY</scope>
</reference>
<reference key="7">
    <citation type="journal article" date="2010" name="Plant Cell">
        <title>EXPO, an exocyst-positive organelle distinct from multivesicular endosomes and autophagosomes, mediates cytosol to cell wall exocytosis in Arabidopsis and tobacco cells.</title>
        <authorList>
            <person name="Wang J."/>
            <person name="Ding Y."/>
            <person name="Wang J."/>
            <person name="Hillmer S."/>
            <person name="Miao Y."/>
            <person name="Lo S.W."/>
            <person name="Wang X."/>
            <person name="Robinson D.G."/>
            <person name="Jiang L."/>
        </authorList>
    </citation>
    <scope>FUNCTION</scope>
    <scope>SUBCELLULAR LOCATION</scope>
</reference>
<reference key="8">
    <citation type="journal article" date="2010" name="Plant Physiol.">
        <title>Expression and functional analyses of EXO70 genes in Arabidopsis implicate their roles in regulating cell type-specific exocytosis.</title>
        <authorList>
            <person name="Li S."/>
            <person name="van Os G.M.A."/>
            <person name="Ren S."/>
            <person name="Yu D."/>
            <person name="Ketelaar T."/>
            <person name="Emons A.M.C."/>
            <person name="Liu C.-M."/>
        </authorList>
    </citation>
    <scope>TISSUE SPECIFICITY</scope>
</reference>
<reference key="9">
    <citation type="journal article" date="2014" name="Mol. Biol. Cell">
        <title>Exo70E2 is essential for exocyst subunit recruitment and EXPO formation in both plants and animals.</title>
        <authorList>
            <person name="Ding Y."/>
            <person name="Wang J."/>
            <person name="Chun Lai J.H."/>
            <person name="Ling Chan V.H."/>
            <person name="Wang X."/>
            <person name="Cai Y."/>
            <person name="Tan X."/>
            <person name="Bao Y."/>
            <person name="Xia J."/>
            <person name="Robinson D.G."/>
            <person name="Jiang L."/>
        </authorList>
    </citation>
    <scope>FUNCTION</scope>
    <scope>DISRUPTION PHENOTYPE</scope>
    <scope>SUBCELLULAR LOCATION</scope>
    <scope>SUBUNIT</scope>
    <scope>INTERACTION WITH SEC6; SEC10A AND SEC10B</scope>
    <source>
        <strain>cv. Columbia</strain>
    </source>
</reference>
<sequence length="639" mass="73486">MAEFDSKVPVSGMNNHVFEACHHVVKALRASDNNLDANLRKLLSDLEMHLSTFGIADTKVEDAGFSEIKKRFKEAVKRIRSWETNQSTMFEAGLSEADQFFQALYDVQTVLVGFKALPMKTNQMEKDVYNQATVALDIAMLRLEKELCDVLHQHKRHVQPDYLAVSSRRKDIVYDESFVSLDDEVIVEASSHEDDEQISDFYNSDLVDPIVLPHIKAIANAMFACEYDQPFCEAFIGVQREALEEYMVTLEMERFSCVDVLRMDWEDLNGAMRKWTKVVKIITQVYLASEKQLCDQILGDFESISTACFIEISKDAILSLLNFGEAVVLRSCKPEMLERFLSMYEVSAEILVDVDNLFPDETGSSLRIAFHNLSKKLADHTTTTFLKFKDAIASDESTRPFHGGGIHHLTRYVMNYLKLLPEYTDSLNSLLQNIHVDDSIPEKTGEDVLPSTFSPMARHLRSIVTTLESSLERKAQLYADEALKSIFLMNNFRYMVQKVKGSELRRLFGDEWIRKHIASYQCNVTNYERSTWSSILALLRDNNDSVRTLRERCRLFSLAFDDVYKNQTRWSVPDSELRDDLHISTSVKVVQSYRGFLGRNAVRIGEKHIRYTCEDIENMLLDLFECLPSPRSLRSSRKR</sequence>
<feature type="chain" id="PRO_0000440983" description="Exocyst complex component EXO70E2">
    <location>
        <begin position="1"/>
        <end position="639"/>
    </location>
</feature>
<dbReference type="EMBL" id="AB006696">
    <property type="protein sequence ID" value="BAB10364.1"/>
    <property type="molecule type" value="Genomic_DNA"/>
</dbReference>
<dbReference type="EMBL" id="CP002688">
    <property type="protein sequence ID" value="AED97410.1"/>
    <property type="molecule type" value="Genomic_DNA"/>
</dbReference>
<dbReference type="EMBL" id="CP002688">
    <property type="protein sequence ID" value="AED97411.1"/>
    <property type="molecule type" value="Genomic_DNA"/>
</dbReference>
<dbReference type="EMBL" id="AY050411">
    <property type="protein sequence ID" value="AAK91427.1"/>
    <property type="molecule type" value="mRNA"/>
</dbReference>
<dbReference type="EMBL" id="AY059656">
    <property type="protein sequence ID" value="AAL31149.1"/>
    <property type="molecule type" value="mRNA"/>
</dbReference>
<dbReference type="EMBL" id="AK317325">
    <property type="protein sequence ID" value="BAH19999.1"/>
    <property type="molecule type" value="mRNA"/>
</dbReference>
<dbReference type="RefSeq" id="NP_001032116.1">
    <property type="nucleotide sequence ID" value="NM_001037039.2"/>
</dbReference>
<dbReference type="RefSeq" id="NP_200909.1">
    <property type="nucleotide sequence ID" value="NM_125494.3"/>
</dbReference>
<dbReference type="SMR" id="Q9FNR3"/>
<dbReference type="FunCoup" id="Q9FNR3">
    <property type="interactions" value="2868"/>
</dbReference>
<dbReference type="IntAct" id="Q9FNR3">
    <property type="interactions" value="53"/>
</dbReference>
<dbReference type="STRING" id="3702.Q9FNR3"/>
<dbReference type="iPTMnet" id="Q9FNR3"/>
<dbReference type="PaxDb" id="3702-AT5G61010.1"/>
<dbReference type="EnsemblPlants" id="AT5G61010.1">
    <property type="protein sequence ID" value="AT5G61010.1"/>
    <property type="gene ID" value="AT5G61010"/>
</dbReference>
<dbReference type="EnsemblPlants" id="AT5G61010.2">
    <property type="protein sequence ID" value="AT5G61010.2"/>
    <property type="gene ID" value="AT5G61010"/>
</dbReference>
<dbReference type="GeneID" id="836222"/>
<dbReference type="Gramene" id="AT5G61010.1">
    <property type="protein sequence ID" value="AT5G61010.1"/>
    <property type="gene ID" value="AT5G61010"/>
</dbReference>
<dbReference type="Gramene" id="AT5G61010.2">
    <property type="protein sequence ID" value="AT5G61010.2"/>
    <property type="gene ID" value="AT5G61010"/>
</dbReference>
<dbReference type="KEGG" id="ath:AT5G61010"/>
<dbReference type="Araport" id="AT5G61010"/>
<dbReference type="TAIR" id="AT5G61010">
    <property type="gene designation" value="EXO70E2"/>
</dbReference>
<dbReference type="eggNOG" id="KOG2344">
    <property type="taxonomic scope" value="Eukaryota"/>
</dbReference>
<dbReference type="HOGENOM" id="CLU_010236_2_2_1"/>
<dbReference type="InParanoid" id="Q9FNR3"/>
<dbReference type="OMA" id="ALQHIFM"/>
<dbReference type="PhylomeDB" id="Q9FNR3"/>
<dbReference type="PRO" id="PR:Q9FNR3"/>
<dbReference type="Proteomes" id="UP000006548">
    <property type="component" value="Chromosome 5"/>
</dbReference>
<dbReference type="ExpressionAtlas" id="Q9FNR3">
    <property type="expression patterns" value="baseline and differential"/>
</dbReference>
<dbReference type="GO" id="GO:0005829">
    <property type="term" value="C:cytosol"/>
    <property type="evidence" value="ECO:0000314"/>
    <property type="project" value="TAIR"/>
</dbReference>
<dbReference type="GO" id="GO:0012505">
    <property type="term" value="C:endomembrane system"/>
    <property type="evidence" value="ECO:0007669"/>
    <property type="project" value="UniProtKB-SubCell"/>
</dbReference>
<dbReference type="GO" id="GO:0000145">
    <property type="term" value="C:exocyst"/>
    <property type="evidence" value="ECO:0000314"/>
    <property type="project" value="UniProtKB"/>
</dbReference>
<dbReference type="GO" id="GO:0070062">
    <property type="term" value="C:extracellular exosome"/>
    <property type="evidence" value="ECO:0000314"/>
    <property type="project" value="TAIR"/>
</dbReference>
<dbReference type="GO" id="GO:0005576">
    <property type="term" value="C:extracellular region"/>
    <property type="evidence" value="ECO:0000314"/>
    <property type="project" value="UniProtKB"/>
</dbReference>
<dbReference type="GO" id="GO:0005886">
    <property type="term" value="C:plasma membrane"/>
    <property type="evidence" value="ECO:0000314"/>
    <property type="project" value="UniProtKB"/>
</dbReference>
<dbReference type="GO" id="GO:0005546">
    <property type="term" value="F:phosphatidylinositol-4,5-bisphosphate binding"/>
    <property type="evidence" value="ECO:0007669"/>
    <property type="project" value="InterPro"/>
</dbReference>
<dbReference type="GO" id="GO:0052542">
    <property type="term" value="P:defense response by callose deposition"/>
    <property type="evidence" value="ECO:0000315"/>
    <property type="project" value="TAIR"/>
</dbReference>
<dbReference type="GO" id="GO:0006887">
    <property type="term" value="P:exocytosis"/>
    <property type="evidence" value="ECO:0007669"/>
    <property type="project" value="UniProtKB-KW"/>
</dbReference>
<dbReference type="GO" id="GO:0006955">
    <property type="term" value="P:immune response"/>
    <property type="evidence" value="ECO:0000315"/>
    <property type="project" value="TAIR"/>
</dbReference>
<dbReference type="GO" id="GO:1903553">
    <property type="term" value="P:positive regulation of extracellular exosome assembly"/>
    <property type="evidence" value="ECO:0000314"/>
    <property type="project" value="UniProtKB"/>
</dbReference>
<dbReference type="GO" id="GO:0015031">
    <property type="term" value="P:protein transport"/>
    <property type="evidence" value="ECO:0007669"/>
    <property type="project" value="UniProtKB-KW"/>
</dbReference>
<dbReference type="GO" id="GO:1903533">
    <property type="term" value="P:regulation of protein targeting"/>
    <property type="evidence" value="ECO:0000314"/>
    <property type="project" value="UniProtKB"/>
</dbReference>
<dbReference type="Gene3D" id="1.20.1280.170">
    <property type="entry name" value="Exocyst complex component Exo70"/>
    <property type="match status" value="1"/>
</dbReference>
<dbReference type="InterPro" id="IPR016159">
    <property type="entry name" value="Cullin_repeat-like_dom_sf"/>
</dbReference>
<dbReference type="InterPro" id="IPR004140">
    <property type="entry name" value="Exo70"/>
</dbReference>
<dbReference type="InterPro" id="IPR046364">
    <property type="entry name" value="Exo70_C"/>
</dbReference>
<dbReference type="PANTHER" id="PTHR12542:SF92">
    <property type="entry name" value="EXOCYST COMPLEX COMPONENT EXO70E2"/>
    <property type="match status" value="1"/>
</dbReference>
<dbReference type="PANTHER" id="PTHR12542">
    <property type="entry name" value="EXOCYST COMPLEX PROTEIN EXO70"/>
    <property type="match status" value="1"/>
</dbReference>
<dbReference type="Pfam" id="PF03081">
    <property type="entry name" value="Exo70_C"/>
    <property type="match status" value="1"/>
</dbReference>
<dbReference type="Pfam" id="PF20669">
    <property type="entry name" value="Exo70_N"/>
    <property type="match status" value="1"/>
</dbReference>
<dbReference type="SUPFAM" id="SSF74788">
    <property type="entry name" value="Cullin repeat-like"/>
    <property type="match status" value="1"/>
</dbReference>